<sequence>MSECGGRGGGGGSSSSSDDAEDEGGGGGPAGSGSLSPAPAASSEGRLRRGLRGASLMARRRPELLCGAVALGCALLLALKFTCSRAKDVIIPAKPPVSFFSSRSPVLDLFQGQLDYAEHIRRDSEVVLLFFYAPWCGQSIAARAEIEQAASRLSDQVLFVAINCWWNQGKCRKQKHFFYFPVIYLYHRSFGPIEYKGPMSAVYIEKFVRRVMKPLLYIPSQSELLDFLSNYEPGVLGYFEFSGSPQPPGYLTFFTSALHSLKKDYLGTVRFGVITNKHLAKLVSLVHSGSVYLHRHFNTSLVFPREVINYTAENICKWALENRETLVRWLWPHGGKSLLLNNELKKGPALFVFIPFNPLAESHPLIDEITEVALEYNNCHGDQVVERLLQHLRRVDAPAFKSLAPDPPARLPDPPLITASPCCNTVVLPRWHSISRTHNVCELCVNQTAGGLRPSSVSMPQCSFFEMAAALDSFYLKEQTFYHVVSDSIECSNFLSFYSPFSYYTACCRTINRGVAGFIDSEQGVFETPPVAFSSLEKKCEVESPGSVPHIEENRYLFPELETSSSSFTGLSCRTNKTLNIYLLDSNLFWLYAERLGAPSAARVKEFATIVDVKEESHYILDPKQALMKFTLESFIQNFSVLYSPLKRHLIGSDSTQFTSQRLITEVTTDTFWEVVLQKQDVLLLYYAQWCGFCPALNHVFIQLARLLPSDTFTVARIDVSQNDLPWEFMVDRLPTVLFFPCNRKDLSVKYPEDLPITLPNLLRFILHHSDPASDPRNLAGPPTAECLQNEAVLQQGHIAHLEREIRKLRAEIGTLQRAQVQVEARLASARRDEHRLLRQQHTLERQHDLLRLHSEQLQALYEHKTRELDEVARKLQELADASETLLTENTWLKILVATMEQRLEGRDGADDRVPPSKARSEHPEPPGAPRLPASTPLPANISSTLASEGSPENRTD</sequence>
<organism>
    <name type="scientific">Bos taurus</name>
    <name type="common">Bovine</name>
    <dbReference type="NCBI Taxonomy" id="9913"/>
    <lineage>
        <taxon>Eukaryota</taxon>
        <taxon>Metazoa</taxon>
        <taxon>Chordata</taxon>
        <taxon>Craniata</taxon>
        <taxon>Vertebrata</taxon>
        <taxon>Euteleostomi</taxon>
        <taxon>Mammalia</taxon>
        <taxon>Eutheria</taxon>
        <taxon>Laurasiatheria</taxon>
        <taxon>Artiodactyla</taxon>
        <taxon>Ruminantia</taxon>
        <taxon>Pecora</taxon>
        <taxon>Bovidae</taxon>
        <taxon>Bovinae</taxon>
        <taxon>Bos</taxon>
    </lineage>
</organism>
<reference key="1">
    <citation type="submission" date="2006-09" db="EMBL/GenBank/DDBJ databases">
        <authorList>
            <consortium name="NIH - Mammalian Gene Collection (MGC) project"/>
        </authorList>
    </citation>
    <scope>NUCLEOTIDE SEQUENCE [LARGE SCALE MRNA]</scope>
    <source>
        <strain>Hereford</strain>
        <tissue>Uterus</tissue>
    </source>
</reference>
<dbReference type="EMBL" id="BC123384">
    <property type="protein sequence ID" value="AAI23385.1"/>
    <property type="molecule type" value="mRNA"/>
</dbReference>
<dbReference type="RefSeq" id="NP_001076889.1">
    <property type="nucleotide sequence ID" value="NM_001083420.1"/>
</dbReference>
<dbReference type="SMR" id="A4FUW8"/>
<dbReference type="FunCoup" id="A4FUW8">
    <property type="interactions" value="2333"/>
</dbReference>
<dbReference type="STRING" id="9913.ENSBTAP00000019741"/>
<dbReference type="PaxDb" id="9913-ENSBTAP00000019741"/>
<dbReference type="GeneID" id="513509"/>
<dbReference type="KEGG" id="bta:513509"/>
<dbReference type="CTD" id="51061"/>
<dbReference type="eggNOG" id="KOG0190">
    <property type="taxonomic scope" value="Eukaryota"/>
</dbReference>
<dbReference type="InParanoid" id="A4FUW8"/>
<dbReference type="OrthoDB" id="1910803at2759"/>
<dbReference type="Proteomes" id="UP000009136">
    <property type="component" value="Unplaced"/>
</dbReference>
<dbReference type="GO" id="GO:0005789">
    <property type="term" value="C:endoplasmic reticulum membrane"/>
    <property type="evidence" value="ECO:0007669"/>
    <property type="project" value="UniProtKB-SubCell"/>
</dbReference>
<dbReference type="CDD" id="cd03006">
    <property type="entry name" value="PDI_a_EFP1_N"/>
    <property type="match status" value="1"/>
</dbReference>
<dbReference type="CDD" id="cd02995">
    <property type="entry name" value="PDI_a_PDI_a'_C"/>
    <property type="match status" value="1"/>
</dbReference>
<dbReference type="CDD" id="cd02981">
    <property type="entry name" value="PDI_b_family"/>
    <property type="match status" value="1"/>
</dbReference>
<dbReference type="Gene3D" id="3.40.30.10">
    <property type="entry name" value="Glutaredoxin"/>
    <property type="match status" value="2"/>
</dbReference>
<dbReference type="InterPro" id="IPR036249">
    <property type="entry name" value="Thioredoxin-like_sf"/>
</dbReference>
<dbReference type="InterPro" id="IPR052792">
    <property type="entry name" value="Thioredoxin_dom-contain_11"/>
</dbReference>
<dbReference type="InterPro" id="IPR013766">
    <property type="entry name" value="Thioredoxin_domain"/>
</dbReference>
<dbReference type="PANTHER" id="PTHR46497">
    <property type="entry name" value="THIOREDOXIN DOMAIN-CONTAINING PROTEIN 11"/>
    <property type="match status" value="1"/>
</dbReference>
<dbReference type="PANTHER" id="PTHR46497:SF1">
    <property type="entry name" value="THIOREDOXIN DOMAIN-CONTAINING PROTEIN 11"/>
    <property type="match status" value="1"/>
</dbReference>
<dbReference type="Pfam" id="PF00085">
    <property type="entry name" value="Thioredoxin"/>
    <property type="match status" value="2"/>
</dbReference>
<dbReference type="SUPFAM" id="SSF52833">
    <property type="entry name" value="Thioredoxin-like"/>
    <property type="match status" value="2"/>
</dbReference>
<dbReference type="PROSITE" id="PS51352">
    <property type="entry name" value="THIOREDOXIN_2"/>
    <property type="match status" value="2"/>
</dbReference>
<feature type="chain" id="PRO_0000297489" description="Thioredoxin domain-containing protein 11">
    <location>
        <begin position="1"/>
        <end position="957"/>
    </location>
</feature>
<feature type="transmembrane region" description="Helical" evidence="2">
    <location>
        <begin position="64"/>
        <end position="84"/>
    </location>
</feature>
<feature type="domain" description="Thioredoxin 1" evidence="3">
    <location>
        <begin position="91"/>
        <end position="213"/>
    </location>
</feature>
<feature type="domain" description="Thioredoxin 2" evidence="3">
    <location>
        <begin position="621"/>
        <end position="771"/>
    </location>
</feature>
<feature type="region of interest" description="Disordered" evidence="4">
    <location>
        <begin position="1"/>
        <end position="47"/>
    </location>
</feature>
<feature type="region of interest" description="Disordered" evidence="4">
    <location>
        <begin position="904"/>
        <end position="957"/>
    </location>
</feature>
<feature type="coiled-coil region" evidence="2">
    <location>
        <begin position="785"/>
        <end position="889"/>
    </location>
</feature>
<feature type="compositionally biased region" description="Gly residues" evidence="4">
    <location>
        <begin position="1"/>
        <end position="13"/>
    </location>
</feature>
<feature type="compositionally biased region" description="Low complexity" evidence="4">
    <location>
        <begin position="32"/>
        <end position="44"/>
    </location>
</feature>
<feature type="compositionally biased region" description="Basic and acidic residues" evidence="4">
    <location>
        <begin position="904"/>
        <end position="925"/>
    </location>
</feature>
<feature type="compositionally biased region" description="Polar residues" evidence="4">
    <location>
        <begin position="941"/>
        <end position="951"/>
    </location>
</feature>
<feature type="disulfide bond" description="Redox-active" evidence="3">
    <location>
        <begin position="441"/>
        <end position="444"/>
    </location>
</feature>
<feature type="disulfide bond" description="Redox-active" evidence="3">
    <location>
        <begin position="691"/>
        <end position="694"/>
    </location>
</feature>
<comment type="function">
    <text evidence="1">May act as a redox regulator involved in DUOX proteins folding. The interaction with DUOX1 and DUOX2 suggest that it belongs to a multiprotein complex constituting the thyroid H(2)O(2) generating system. It is however not sufficient to assist DUOX1 and DUOX2 in H(2)O(2) generation (By similarity).</text>
</comment>
<comment type="subunit">
    <text evidence="1">Interacts with the cytoplasmic part of DUOX1 and DUOX2. Interacts with TPO and CYBA (By similarity).</text>
</comment>
<comment type="subcellular location">
    <subcellularLocation>
        <location evidence="1">Endoplasmic reticulum membrane</location>
        <topology evidence="1">Single-pass membrane protein</topology>
    </subcellularLocation>
</comment>
<comment type="similarity">
    <text evidence="5">Belongs to the protein disulfide isomerase family.</text>
</comment>
<gene>
    <name type="primary">TXNDC11</name>
</gene>
<evidence type="ECO:0000250" key="1"/>
<evidence type="ECO:0000255" key="2"/>
<evidence type="ECO:0000255" key="3">
    <source>
        <dbReference type="PROSITE-ProRule" id="PRU00691"/>
    </source>
</evidence>
<evidence type="ECO:0000256" key="4">
    <source>
        <dbReference type="SAM" id="MobiDB-lite"/>
    </source>
</evidence>
<evidence type="ECO:0000305" key="5"/>
<protein>
    <recommendedName>
        <fullName>Thioredoxin domain-containing protein 11</fullName>
    </recommendedName>
</protein>
<proteinExistence type="evidence at transcript level"/>
<name>TXD11_BOVIN</name>
<accession>A4FUW8</accession>
<keyword id="KW-0175">Coiled coil</keyword>
<keyword id="KW-1015">Disulfide bond</keyword>
<keyword id="KW-0256">Endoplasmic reticulum</keyword>
<keyword id="KW-0472">Membrane</keyword>
<keyword id="KW-0676">Redox-active center</keyword>
<keyword id="KW-1185">Reference proteome</keyword>
<keyword id="KW-0677">Repeat</keyword>
<keyword id="KW-0812">Transmembrane</keyword>
<keyword id="KW-1133">Transmembrane helix</keyword>